<gene>
    <name evidence="1" type="primary">mdoC</name>
    <name evidence="1" type="synonym">opgC</name>
    <name type="ordered locus">Z1681</name>
    <name type="ordered locus">ECs1425</name>
</gene>
<evidence type="ECO:0000255" key="1">
    <source>
        <dbReference type="HAMAP-Rule" id="MF_01066"/>
    </source>
</evidence>
<name>OPGC_ECO57</name>
<sequence>MNPVPAQREYFLDSIRAWLMLLGIPFHISLIYSSHTWHVNSAEPSLWLTLFNDFIHSFRMQVFFVISGYFSYMLFLRYPLKKWWKVRVERVGIPMLTAIPLLTLPQFIMLQYVKGKAESWPGLSLYDKYNTLAWELISHLWFLLVLVVMTTLCVWIFKRIRNNLENSDKTNKKFSMVKLSVIFLCLGIGYAVIRRTIFIVYPPILSNGTFNFIVMQTLFYLPFFILGALAFIFPHLKALFTTPSRGCTLAAALAFVAYLLNQRYGSGDAWMYETESVITMVLGLWMVNVVFSFGHRLLNFQSARVTYFVNASLFIYLVHHPLTLFFGAYITPHITSNWLGFLCGLIFVVGIAIILYEIHLRIPLLKFLFSGKPVVKRENDKAPAR</sequence>
<keyword id="KW-0012">Acyltransferase</keyword>
<keyword id="KW-1003">Cell membrane</keyword>
<keyword id="KW-0472">Membrane</keyword>
<keyword id="KW-1185">Reference proteome</keyword>
<keyword id="KW-0808">Transferase</keyword>
<keyword id="KW-0812">Transmembrane</keyword>
<keyword id="KW-1133">Transmembrane helix</keyword>
<reference key="1">
    <citation type="journal article" date="2001" name="Nature">
        <title>Genome sequence of enterohaemorrhagic Escherichia coli O157:H7.</title>
        <authorList>
            <person name="Perna N.T."/>
            <person name="Plunkett G. III"/>
            <person name="Burland V."/>
            <person name="Mau B."/>
            <person name="Glasner J.D."/>
            <person name="Rose D.J."/>
            <person name="Mayhew G.F."/>
            <person name="Evans P.S."/>
            <person name="Gregor J."/>
            <person name="Kirkpatrick H.A."/>
            <person name="Posfai G."/>
            <person name="Hackett J."/>
            <person name="Klink S."/>
            <person name="Boutin A."/>
            <person name="Shao Y."/>
            <person name="Miller L."/>
            <person name="Grotbeck E.J."/>
            <person name="Davis N.W."/>
            <person name="Lim A."/>
            <person name="Dimalanta E.T."/>
            <person name="Potamousis K."/>
            <person name="Apodaca J."/>
            <person name="Anantharaman T.S."/>
            <person name="Lin J."/>
            <person name="Yen G."/>
            <person name="Schwartz D.C."/>
            <person name="Welch R.A."/>
            <person name="Blattner F.R."/>
        </authorList>
    </citation>
    <scope>NUCLEOTIDE SEQUENCE [LARGE SCALE GENOMIC DNA]</scope>
    <source>
        <strain>O157:H7 / EDL933 / ATCC 700927 / EHEC</strain>
    </source>
</reference>
<reference key="2">
    <citation type="journal article" date="2001" name="DNA Res.">
        <title>Complete genome sequence of enterohemorrhagic Escherichia coli O157:H7 and genomic comparison with a laboratory strain K-12.</title>
        <authorList>
            <person name="Hayashi T."/>
            <person name="Makino K."/>
            <person name="Ohnishi M."/>
            <person name="Kurokawa K."/>
            <person name="Ishii K."/>
            <person name="Yokoyama K."/>
            <person name="Han C.-G."/>
            <person name="Ohtsubo E."/>
            <person name="Nakayama K."/>
            <person name="Murata T."/>
            <person name="Tanaka M."/>
            <person name="Tobe T."/>
            <person name="Iida T."/>
            <person name="Takami H."/>
            <person name="Honda T."/>
            <person name="Sasakawa C."/>
            <person name="Ogasawara N."/>
            <person name="Yasunaga T."/>
            <person name="Kuhara S."/>
            <person name="Shiba T."/>
            <person name="Hattori M."/>
            <person name="Shinagawa H."/>
        </authorList>
    </citation>
    <scope>NUCLEOTIDE SEQUENCE [LARGE SCALE GENOMIC DNA]</scope>
    <source>
        <strain>O157:H7 / Sakai / RIMD 0509952 / EHEC</strain>
    </source>
</reference>
<dbReference type="EC" id="2.1.-.-" evidence="1"/>
<dbReference type="EMBL" id="AE005174">
    <property type="protein sequence ID" value="AAG55793.1"/>
    <property type="molecule type" value="Genomic_DNA"/>
</dbReference>
<dbReference type="EMBL" id="BA000007">
    <property type="protein sequence ID" value="BAB34848.1"/>
    <property type="molecule type" value="Genomic_DNA"/>
</dbReference>
<dbReference type="PIR" id="A99807">
    <property type="entry name" value="A99807"/>
</dbReference>
<dbReference type="PIR" id="E85666">
    <property type="entry name" value="E85666"/>
</dbReference>
<dbReference type="RefSeq" id="NP_309452.1">
    <property type="nucleotide sequence ID" value="NC_002695.1"/>
</dbReference>
<dbReference type="RefSeq" id="WP_001070358.1">
    <property type="nucleotide sequence ID" value="NZ_VOAI01000018.1"/>
</dbReference>
<dbReference type="SMR" id="Q8X9I6"/>
<dbReference type="STRING" id="155864.Z1681"/>
<dbReference type="GeneID" id="914215"/>
<dbReference type="KEGG" id="ece:Z1681"/>
<dbReference type="KEGG" id="ecs:ECs_1425"/>
<dbReference type="PATRIC" id="fig|386585.9.peg.1526"/>
<dbReference type="eggNOG" id="COG1835">
    <property type="taxonomic scope" value="Bacteria"/>
</dbReference>
<dbReference type="HOGENOM" id="CLU_036182_2_0_6"/>
<dbReference type="OMA" id="AEWLQWP"/>
<dbReference type="UniPathway" id="UPA00637"/>
<dbReference type="Proteomes" id="UP000000558">
    <property type="component" value="Chromosome"/>
</dbReference>
<dbReference type="Proteomes" id="UP000002519">
    <property type="component" value="Chromosome"/>
</dbReference>
<dbReference type="GO" id="GO:0005886">
    <property type="term" value="C:plasma membrane"/>
    <property type="evidence" value="ECO:0007669"/>
    <property type="project" value="UniProtKB-SubCell"/>
</dbReference>
<dbReference type="GO" id="GO:0016747">
    <property type="term" value="F:acyltransferase activity, transferring groups other than amino-acyl groups"/>
    <property type="evidence" value="ECO:0007669"/>
    <property type="project" value="InterPro"/>
</dbReference>
<dbReference type="GO" id="GO:0016741">
    <property type="term" value="F:transferase activity, transferring one-carbon groups"/>
    <property type="evidence" value="ECO:0007669"/>
    <property type="project" value="UniProtKB-UniRule"/>
</dbReference>
<dbReference type="GO" id="GO:0009250">
    <property type="term" value="P:glucan biosynthetic process"/>
    <property type="evidence" value="ECO:0007669"/>
    <property type="project" value="UniProtKB-UniRule"/>
</dbReference>
<dbReference type="HAMAP" id="MF_01066">
    <property type="entry name" value="MdoC_OpgC"/>
    <property type="match status" value="1"/>
</dbReference>
<dbReference type="InterPro" id="IPR002656">
    <property type="entry name" value="Acyl_transf_3_dom"/>
</dbReference>
<dbReference type="InterPro" id="IPR050623">
    <property type="entry name" value="Glucan_succinyl_AcylTrfase"/>
</dbReference>
<dbReference type="InterPro" id="IPR023723">
    <property type="entry name" value="Glucans_biosynth_C"/>
</dbReference>
<dbReference type="NCBIfam" id="NF003014">
    <property type="entry name" value="PRK03854.1"/>
    <property type="match status" value="1"/>
</dbReference>
<dbReference type="PANTHER" id="PTHR36927">
    <property type="entry name" value="BLR4337 PROTEIN"/>
    <property type="match status" value="1"/>
</dbReference>
<dbReference type="PANTHER" id="PTHR36927:SF3">
    <property type="entry name" value="GLUCANS BIOSYNTHESIS PROTEIN C"/>
    <property type="match status" value="1"/>
</dbReference>
<dbReference type="Pfam" id="PF01757">
    <property type="entry name" value="Acyl_transf_3"/>
    <property type="match status" value="1"/>
</dbReference>
<feature type="chain" id="PRO_0000218051" description="Glucans biosynthesis protein C">
    <location>
        <begin position="1"/>
        <end position="385"/>
    </location>
</feature>
<feature type="transmembrane region" description="Helical" evidence="1">
    <location>
        <begin position="17"/>
        <end position="39"/>
    </location>
</feature>
<feature type="transmembrane region" description="Helical" evidence="1">
    <location>
        <begin position="54"/>
        <end position="76"/>
    </location>
</feature>
<feature type="transmembrane region" description="Helical" evidence="1">
    <location>
        <begin position="88"/>
        <end position="110"/>
    </location>
</feature>
<feature type="transmembrane region" description="Helical" evidence="1">
    <location>
        <begin position="136"/>
        <end position="158"/>
    </location>
</feature>
<feature type="transmembrane region" description="Helical" evidence="1">
    <location>
        <begin position="179"/>
        <end position="198"/>
    </location>
</feature>
<feature type="transmembrane region" description="Helical" evidence="1">
    <location>
        <begin position="213"/>
        <end position="235"/>
    </location>
</feature>
<feature type="transmembrane region" description="Helical" evidence="1">
    <location>
        <begin position="242"/>
        <end position="261"/>
    </location>
</feature>
<feature type="transmembrane region" description="Helical" evidence="1">
    <location>
        <begin position="276"/>
        <end position="295"/>
    </location>
</feature>
<feature type="transmembrane region" description="Helical" evidence="1">
    <location>
        <begin position="308"/>
        <end position="330"/>
    </location>
</feature>
<feature type="transmembrane region" description="Helical" evidence="1">
    <location>
        <begin position="334"/>
        <end position="356"/>
    </location>
</feature>
<proteinExistence type="inferred from homology"/>
<accession>Q8X9I6</accession>
<protein>
    <recommendedName>
        <fullName evidence="1">Glucans biosynthesis protein C</fullName>
        <ecNumber evidence="1">2.1.-.-</ecNumber>
    </recommendedName>
</protein>
<organism>
    <name type="scientific">Escherichia coli O157:H7</name>
    <dbReference type="NCBI Taxonomy" id="83334"/>
    <lineage>
        <taxon>Bacteria</taxon>
        <taxon>Pseudomonadati</taxon>
        <taxon>Pseudomonadota</taxon>
        <taxon>Gammaproteobacteria</taxon>
        <taxon>Enterobacterales</taxon>
        <taxon>Enterobacteriaceae</taxon>
        <taxon>Escherichia</taxon>
    </lineage>
</organism>
<comment type="function">
    <text evidence="1">Necessary for the succinyl substitution of periplasmic glucans. Could catalyze the transfer of succinyl residues from the cytoplasmic side of the membrane to the nascent glucan backbones on the periplasmic side of the membrane.</text>
</comment>
<comment type="pathway">
    <text evidence="1">Glycan metabolism; osmoregulated periplasmic glucan (OPG) biosynthesis.</text>
</comment>
<comment type="subcellular location">
    <subcellularLocation>
        <location evidence="1">Cell membrane</location>
        <topology evidence="1">Multi-pass membrane protein</topology>
    </subcellularLocation>
</comment>
<comment type="similarity">
    <text evidence="1">Belongs to the acyltransferase 3 family. OpgC subfamily.</text>
</comment>